<feature type="chain" id="PRO_1000091884" description="3-deoxy-manno-octulosonate cytidylyltransferase">
    <location>
        <begin position="1"/>
        <end position="251"/>
    </location>
</feature>
<name>KDSB_PARD8</name>
<proteinExistence type="inferred from homology"/>
<comment type="function">
    <text evidence="1">Activates KDO (a required 8-carbon sugar) for incorporation into bacterial lipopolysaccharide in Gram-negative bacteria.</text>
</comment>
<comment type="catalytic activity">
    <reaction evidence="1">
        <text>3-deoxy-alpha-D-manno-oct-2-ulosonate + CTP = CMP-3-deoxy-beta-D-manno-octulosonate + diphosphate</text>
        <dbReference type="Rhea" id="RHEA:23448"/>
        <dbReference type="ChEBI" id="CHEBI:33019"/>
        <dbReference type="ChEBI" id="CHEBI:37563"/>
        <dbReference type="ChEBI" id="CHEBI:85986"/>
        <dbReference type="ChEBI" id="CHEBI:85987"/>
        <dbReference type="EC" id="2.7.7.38"/>
    </reaction>
</comment>
<comment type="pathway">
    <text evidence="1">Nucleotide-sugar biosynthesis; CMP-3-deoxy-D-manno-octulosonate biosynthesis; CMP-3-deoxy-D-manno-octulosonate from 3-deoxy-D-manno-octulosonate and CTP: step 1/1.</text>
</comment>
<comment type="pathway">
    <text evidence="1">Bacterial outer membrane biogenesis; lipopolysaccharide biosynthesis.</text>
</comment>
<comment type="subcellular location">
    <subcellularLocation>
        <location evidence="1">Cytoplasm</location>
    </subcellularLocation>
</comment>
<comment type="similarity">
    <text evidence="1">Belongs to the KdsB family.</text>
</comment>
<sequence>MMKFIGIIPARYASTRFPGKPLADMNGKPMIQRVYEQVKDVLDSVCVATDDIRIENAVKAFGGQVVMTSDQHRSGTDRCYEAYQKIGEGYDVIVNIQGDEPFIHPEQIQTIKTCFADANTQIATLVKPFRSDDDFESSLFNPNSPKVVLNKNNEAMYFSRSIIPYIRGKKYTEWLPSHTFYKHIGLYAYRAQVLKEITQLPQSALELAESLEQLRWLENGYKIKVGITEQETIGIDTPEDMEKALAFLANR</sequence>
<organism>
    <name type="scientific">Parabacteroides distasonis (strain ATCC 8503 / DSM 20701 / CIP 104284 / JCM 5825 / NCTC 11152)</name>
    <dbReference type="NCBI Taxonomy" id="435591"/>
    <lineage>
        <taxon>Bacteria</taxon>
        <taxon>Pseudomonadati</taxon>
        <taxon>Bacteroidota</taxon>
        <taxon>Bacteroidia</taxon>
        <taxon>Bacteroidales</taxon>
        <taxon>Tannerellaceae</taxon>
        <taxon>Parabacteroides</taxon>
    </lineage>
</organism>
<keyword id="KW-0963">Cytoplasm</keyword>
<keyword id="KW-0448">Lipopolysaccharide biosynthesis</keyword>
<keyword id="KW-0548">Nucleotidyltransferase</keyword>
<keyword id="KW-1185">Reference proteome</keyword>
<keyword id="KW-0808">Transferase</keyword>
<accession>A6L9D4</accession>
<dbReference type="EC" id="2.7.7.38" evidence="1"/>
<dbReference type="EMBL" id="CP000140">
    <property type="protein sequence ID" value="ABR42298.1"/>
    <property type="molecule type" value="Genomic_DNA"/>
</dbReference>
<dbReference type="SMR" id="A6L9D4"/>
<dbReference type="STRING" id="435591.BDI_0522"/>
<dbReference type="PaxDb" id="435591-BDI_0522"/>
<dbReference type="KEGG" id="pdi:BDI_0522"/>
<dbReference type="eggNOG" id="COG1212">
    <property type="taxonomic scope" value="Bacteria"/>
</dbReference>
<dbReference type="HOGENOM" id="CLU_065038_0_1_10"/>
<dbReference type="UniPathway" id="UPA00030"/>
<dbReference type="UniPathway" id="UPA00358">
    <property type="reaction ID" value="UER00476"/>
</dbReference>
<dbReference type="Proteomes" id="UP000000566">
    <property type="component" value="Chromosome"/>
</dbReference>
<dbReference type="GO" id="GO:0005829">
    <property type="term" value="C:cytosol"/>
    <property type="evidence" value="ECO:0007669"/>
    <property type="project" value="TreeGrafter"/>
</dbReference>
<dbReference type="GO" id="GO:0008690">
    <property type="term" value="F:3-deoxy-manno-octulosonate cytidylyltransferase activity"/>
    <property type="evidence" value="ECO:0007669"/>
    <property type="project" value="UniProtKB-UniRule"/>
</dbReference>
<dbReference type="GO" id="GO:0033468">
    <property type="term" value="P:CMP-keto-3-deoxy-D-manno-octulosonic acid biosynthetic process"/>
    <property type="evidence" value="ECO:0007669"/>
    <property type="project" value="UniProtKB-UniRule"/>
</dbReference>
<dbReference type="GO" id="GO:0009103">
    <property type="term" value="P:lipopolysaccharide biosynthetic process"/>
    <property type="evidence" value="ECO:0007669"/>
    <property type="project" value="UniProtKB-UniRule"/>
</dbReference>
<dbReference type="CDD" id="cd02517">
    <property type="entry name" value="CMP-KDO-Synthetase"/>
    <property type="match status" value="1"/>
</dbReference>
<dbReference type="FunFam" id="3.90.550.10:FF:000011">
    <property type="entry name" value="3-deoxy-manno-octulosonate cytidylyltransferase"/>
    <property type="match status" value="1"/>
</dbReference>
<dbReference type="Gene3D" id="3.90.550.10">
    <property type="entry name" value="Spore Coat Polysaccharide Biosynthesis Protein SpsA, Chain A"/>
    <property type="match status" value="1"/>
</dbReference>
<dbReference type="HAMAP" id="MF_00057">
    <property type="entry name" value="KdsB"/>
    <property type="match status" value="1"/>
</dbReference>
<dbReference type="InterPro" id="IPR003329">
    <property type="entry name" value="Cytidylyl_trans"/>
</dbReference>
<dbReference type="InterPro" id="IPR004528">
    <property type="entry name" value="KdsB"/>
</dbReference>
<dbReference type="InterPro" id="IPR029044">
    <property type="entry name" value="Nucleotide-diphossugar_trans"/>
</dbReference>
<dbReference type="NCBIfam" id="TIGR00466">
    <property type="entry name" value="kdsB"/>
    <property type="match status" value="1"/>
</dbReference>
<dbReference type="NCBIfam" id="NF003950">
    <property type="entry name" value="PRK05450.1-3"/>
    <property type="match status" value="1"/>
</dbReference>
<dbReference type="NCBIfam" id="NF003952">
    <property type="entry name" value="PRK05450.1-5"/>
    <property type="match status" value="1"/>
</dbReference>
<dbReference type="NCBIfam" id="NF009905">
    <property type="entry name" value="PRK13368.1"/>
    <property type="match status" value="1"/>
</dbReference>
<dbReference type="PANTHER" id="PTHR42866">
    <property type="entry name" value="3-DEOXY-MANNO-OCTULOSONATE CYTIDYLYLTRANSFERASE"/>
    <property type="match status" value="1"/>
</dbReference>
<dbReference type="PANTHER" id="PTHR42866:SF2">
    <property type="entry name" value="3-DEOXY-MANNO-OCTULOSONATE CYTIDYLYLTRANSFERASE, MITOCHONDRIAL"/>
    <property type="match status" value="1"/>
</dbReference>
<dbReference type="Pfam" id="PF02348">
    <property type="entry name" value="CTP_transf_3"/>
    <property type="match status" value="1"/>
</dbReference>
<dbReference type="SUPFAM" id="SSF53448">
    <property type="entry name" value="Nucleotide-diphospho-sugar transferases"/>
    <property type="match status" value="1"/>
</dbReference>
<gene>
    <name evidence="1" type="primary">kdsB</name>
    <name type="ordered locus">BDI_0522</name>
</gene>
<protein>
    <recommendedName>
        <fullName evidence="1">3-deoxy-manno-octulosonate cytidylyltransferase</fullName>
        <ecNumber evidence="1">2.7.7.38</ecNumber>
    </recommendedName>
    <alternativeName>
        <fullName evidence="1">CMP-2-keto-3-deoxyoctulosonic acid synthase</fullName>
        <shortName evidence="1">CKS</shortName>
        <shortName evidence="1">CMP-KDO synthase</shortName>
    </alternativeName>
</protein>
<reference key="1">
    <citation type="journal article" date="2007" name="PLoS Biol.">
        <title>Evolution of symbiotic bacteria in the distal human intestine.</title>
        <authorList>
            <person name="Xu J."/>
            <person name="Mahowald M.A."/>
            <person name="Ley R.E."/>
            <person name="Lozupone C.A."/>
            <person name="Hamady M."/>
            <person name="Martens E.C."/>
            <person name="Henrissat B."/>
            <person name="Coutinho P.M."/>
            <person name="Minx P."/>
            <person name="Latreille P."/>
            <person name="Cordum H."/>
            <person name="Van Brunt A."/>
            <person name="Kim K."/>
            <person name="Fulton R.S."/>
            <person name="Fulton L.A."/>
            <person name="Clifton S.W."/>
            <person name="Wilson R.K."/>
            <person name="Knight R.D."/>
            <person name="Gordon J.I."/>
        </authorList>
    </citation>
    <scope>NUCLEOTIDE SEQUENCE [LARGE SCALE GENOMIC DNA]</scope>
    <source>
        <strain>ATCC 8503 / DSM 20701 / CIP 104284 / JCM 5825 / NCTC 11152</strain>
    </source>
</reference>
<evidence type="ECO:0000255" key="1">
    <source>
        <dbReference type="HAMAP-Rule" id="MF_00057"/>
    </source>
</evidence>